<reference evidence="3" key="1">
    <citation type="journal article" date="2000" name="Nature">
        <title>Sequence and analysis of chromosome 3 of the plant Arabidopsis thaliana.</title>
        <authorList>
            <person name="Salanoubat M."/>
            <person name="Lemcke K."/>
            <person name="Rieger M."/>
            <person name="Ansorge W."/>
            <person name="Unseld M."/>
            <person name="Fartmann B."/>
            <person name="Valle G."/>
            <person name="Bloecker H."/>
            <person name="Perez-Alonso M."/>
            <person name="Obermaier B."/>
            <person name="Delseny M."/>
            <person name="Boutry M."/>
            <person name="Grivell L.A."/>
            <person name="Mache R."/>
            <person name="Puigdomenech P."/>
            <person name="De Simone V."/>
            <person name="Choisne N."/>
            <person name="Artiguenave F."/>
            <person name="Robert C."/>
            <person name="Brottier P."/>
            <person name="Wincker P."/>
            <person name="Cattolico L."/>
            <person name="Weissenbach J."/>
            <person name="Saurin W."/>
            <person name="Quetier F."/>
            <person name="Schaefer M."/>
            <person name="Mueller-Auer S."/>
            <person name="Gabel C."/>
            <person name="Fuchs M."/>
            <person name="Benes V."/>
            <person name="Wurmbach E."/>
            <person name="Drzonek H."/>
            <person name="Erfle H."/>
            <person name="Jordan N."/>
            <person name="Bangert S."/>
            <person name="Wiedelmann R."/>
            <person name="Kranz H."/>
            <person name="Voss H."/>
            <person name="Holland R."/>
            <person name="Brandt P."/>
            <person name="Nyakatura G."/>
            <person name="Vezzi A."/>
            <person name="D'Angelo M."/>
            <person name="Pallavicini A."/>
            <person name="Toppo S."/>
            <person name="Simionati B."/>
            <person name="Conrad A."/>
            <person name="Hornischer K."/>
            <person name="Kauer G."/>
            <person name="Loehnert T.-H."/>
            <person name="Nordsiek G."/>
            <person name="Reichelt J."/>
            <person name="Scharfe M."/>
            <person name="Schoen O."/>
            <person name="Bargues M."/>
            <person name="Terol J."/>
            <person name="Climent J."/>
            <person name="Navarro P."/>
            <person name="Collado C."/>
            <person name="Perez-Perez A."/>
            <person name="Ottenwaelder B."/>
            <person name="Duchemin D."/>
            <person name="Cooke R."/>
            <person name="Laudie M."/>
            <person name="Berger-Llauro C."/>
            <person name="Purnelle B."/>
            <person name="Masuy D."/>
            <person name="de Haan M."/>
            <person name="Maarse A.C."/>
            <person name="Alcaraz J.-P."/>
            <person name="Cottet A."/>
            <person name="Casacuberta E."/>
            <person name="Monfort A."/>
            <person name="Argiriou A."/>
            <person name="Flores M."/>
            <person name="Liguori R."/>
            <person name="Vitale D."/>
            <person name="Mannhaupt G."/>
            <person name="Haase D."/>
            <person name="Schoof H."/>
            <person name="Rudd S."/>
            <person name="Zaccaria P."/>
            <person name="Mewes H.-W."/>
            <person name="Mayer K.F.X."/>
            <person name="Kaul S."/>
            <person name="Town C.D."/>
            <person name="Koo H.L."/>
            <person name="Tallon L.J."/>
            <person name="Jenkins J."/>
            <person name="Rooney T."/>
            <person name="Rizzo M."/>
            <person name="Walts A."/>
            <person name="Utterback T."/>
            <person name="Fujii C.Y."/>
            <person name="Shea T.P."/>
            <person name="Creasy T.H."/>
            <person name="Haas B."/>
            <person name="Maiti R."/>
            <person name="Wu D."/>
            <person name="Peterson J."/>
            <person name="Van Aken S."/>
            <person name="Pai G."/>
            <person name="Militscher J."/>
            <person name="Sellers P."/>
            <person name="Gill J.E."/>
            <person name="Feldblyum T.V."/>
            <person name="Preuss D."/>
            <person name="Lin X."/>
            <person name="Nierman W.C."/>
            <person name="Salzberg S.L."/>
            <person name="White O."/>
            <person name="Venter J.C."/>
            <person name="Fraser C.M."/>
            <person name="Kaneko T."/>
            <person name="Nakamura Y."/>
            <person name="Sato S."/>
            <person name="Kato T."/>
            <person name="Asamizu E."/>
            <person name="Sasamoto S."/>
            <person name="Kimura T."/>
            <person name="Idesawa K."/>
            <person name="Kawashima K."/>
            <person name="Kishida Y."/>
            <person name="Kiyokawa C."/>
            <person name="Kohara M."/>
            <person name="Matsumoto M."/>
            <person name="Matsuno A."/>
            <person name="Muraki A."/>
            <person name="Nakayama S."/>
            <person name="Nakazaki N."/>
            <person name="Shinpo S."/>
            <person name="Takeuchi C."/>
            <person name="Wada T."/>
            <person name="Watanabe A."/>
            <person name="Yamada M."/>
            <person name="Yasuda M."/>
            <person name="Tabata S."/>
        </authorList>
    </citation>
    <scope>NUCLEOTIDE SEQUENCE [LARGE SCALE GENOMIC DNA]</scope>
    <source>
        <strain>cv. Columbia</strain>
    </source>
</reference>
<reference key="2">
    <citation type="journal article" date="2017" name="Plant J.">
        <title>Araport11: a complete reannotation of the Arabidopsis thaliana reference genome.</title>
        <authorList>
            <person name="Cheng C.Y."/>
            <person name="Krishnakumar V."/>
            <person name="Chan A.P."/>
            <person name="Thibaud-Nissen F."/>
            <person name="Schobel S."/>
            <person name="Town C.D."/>
        </authorList>
    </citation>
    <scope>GENOME REANNOTATION</scope>
    <source>
        <strain>cv. Columbia</strain>
    </source>
</reference>
<reference evidence="3" key="3">
    <citation type="journal article" date="2001" name="Plant Mol. Biol.">
        <title>Two large Arabidopsis thaliana gene families are homologous to the Brassica gene superfamily that encodes pollen coat proteins and the male component of the self-incompatibility response.</title>
        <authorList>
            <person name="Vanoosthuyse V."/>
            <person name="Miege C."/>
            <person name="Dumas C."/>
            <person name="Cock J.M."/>
        </authorList>
    </citation>
    <scope>IDENTIFICATION</scope>
</reference>
<reference key="4">
    <citation type="journal article" date="2005" name="Plant Physiol.">
        <title>Genome organization of more than 300 defensin-like genes in Arabidopsis.</title>
        <authorList>
            <person name="Silverstein K.A.T."/>
            <person name="Graham M.A."/>
            <person name="Paape T.D."/>
            <person name="VandenBosch K.A."/>
        </authorList>
    </citation>
    <scope>GENE FAMILY</scope>
</reference>
<comment type="subcellular location">
    <subcellularLocation>
        <location evidence="1">Secreted</location>
    </subcellularLocation>
</comment>
<comment type="similarity">
    <text evidence="3">Belongs to the DEFL family.</text>
</comment>
<organism evidence="3">
    <name type="scientific">Arabidopsis thaliana</name>
    <name type="common">Mouse-ear cress</name>
    <dbReference type="NCBI Taxonomy" id="3702"/>
    <lineage>
        <taxon>Eukaryota</taxon>
        <taxon>Viridiplantae</taxon>
        <taxon>Streptophyta</taxon>
        <taxon>Embryophyta</taxon>
        <taxon>Tracheophyta</taxon>
        <taxon>Spermatophyta</taxon>
        <taxon>Magnoliopsida</taxon>
        <taxon>eudicotyledons</taxon>
        <taxon>Gunneridae</taxon>
        <taxon>Pentapetalae</taxon>
        <taxon>rosids</taxon>
        <taxon>malvids</taxon>
        <taxon>Brassicales</taxon>
        <taxon>Brassicaceae</taxon>
        <taxon>Camelineae</taxon>
        <taxon>Arabidopsis</taxon>
    </lineage>
</organism>
<accession>P82732</accession>
<protein>
    <recommendedName>
        <fullName>Putative defensin-like protein 184</fullName>
    </recommendedName>
    <alternativeName>
        <fullName>Putative low-molecular-weight cysteine-rich protein 18</fullName>
        <shortName>Protein LCR18</shortName>
    </alternativeName>
</protein>
<gene>
    <name type="primary">LCR18</name>
    <name type="ordered locus">At3g04945</name>
    <name type="ORF">T9J14</name>
</gene>
<name>DF184_ARATH</name>
<sequence length="76" mass="8491">MKNSSILFVLIIVVFLISSSGNKKMVGEAKKCDQTWTCEGEDKCREKCLTLHNGVGVCDLYTAPLVPKQCFCHYDC</sequence>
<proteinExistence type="inferred from homology"/>
<evidence type="ECO:0000250" key="1"/>
<evidence type="ECO:0000255" key="2"/>
<evidence type="ECO:0000305" key="3"/>
<dbReference type="EMBL" id="AC009465">
    <property type="status" value="NOT_ANNOTATED_CDS"/>
    <property type="molecule type" value="Genomic_DNA"/>
</dbReference>
<dbReference type="EMBL" id="CP002686">
    <property type="protein sequence ID" value="AEE74163.1"/>
    <property type="molecule type" value="Genomic_DNA"/>
</dbReference>
<dbReference type="RefSeq" id="NP_001030639.1">
    <property type="nucleotide sequence ID" value="NM_001035562.1"/>
</dbReference>
<dbReference type="iPTMnet" id="P82732"/>
<dbReference type="PaxDb" id="3702-AT3G04945.1"/>
<dbReference type="ProteomicsDB" id="224210"/>
<dbReference type="EnsemblPlants" id="AT3G04945.1">
    <property type="protein sequence ID" value="AT3G04945.1"/>
    <property type="gene ID" value="AT3G04945"/>
</dbReference>
<dbReference type="GeneID" id="3768872"/>
<dbReference type="Gramene" id="AT3G04945.1">
    <property type="protein sequence ID" value="AT3G04945.1"/>
    <property type="gene ID" value="AT3G04945"/>
</dbReference>
<dbReference type="KEGG" id="ath:AT3G04945"/>
<dbReference type="Araport" id="AT3G04945"/>
<dbReference type="TAIR" id="AT3G04945">
    <property type="gene designation" value="LCR18"/>
</dbReference>
<dbReference type="eggNOG" id="ENOG502T0F4">
    <property type="taxonomic scope" value="Eukaryota"/>
</dbReference>
<dbReference type="HOGENOM" id="CLU_199292_0_0_1"/>
<dbReference type="InParanoid" id="P82732"/>
<dbReference type="OMA" id="PPVPKQC"/>
<dbReference type="OrthoDB" id="1612940at2759"/>
<dbReference type="PhylomeDB" id="P82732"/>
<dbReference type="PRO" id="PR:P82732"/>
<dbReference type="Proteomes" id="UP000006548">
    <property type="component" value="Chromosome 3"/>
</dbReference>
<dbReference type="ExpressionAtlas" id="P82732">
    <property type="expression patterns" value="baseline and differential"/>
</dbReference>
<dbReference type="GO" id="GO:0005576">
    <property type="term" value="C:extracellular region"/>
    <property type="evidence" value="ECO:0007669"/>
    <property type="project" value="UniProtKB-SubCell"/>
</dbReference>
<dbReference type="GO" id="GO:0050832">
    <property type="term" value="P:defense response to fungus"/>
    <property type="evidence" value="ECO:0007669"/>
    <property type="project" value="UniProtKB-KW"/>
</dbReference>
<dbReference type="GO" id="GO:0031640">
    <property type="term" value="P:killing of cells of another organism"/>
    <property type="evidence" value="ECO:0007669"/>
    <property type="project" value="UniProtKB-KW"/>
</dbReference>
<dbReference type="InterPro" id="IPR010851">
    <property type="entry name" value="DEFL"/>
</dbReference>
<dbReference type="PANTHER" id="PTHR33830">
    <property type="entry name" value="DEFENSIN-LIKE PROTEIN 184-RELATED"/>
    <property type="match status" value="1"/>
</dbReference>
<dbReference type="PANTHER" id="PTHR33830:SF30">
    <property type="entry name" value="DEFENSIN-LIKE PROTEIN 184-RELATED"/>
    <property type="match status" value="1"/>
</dbReference>
<dbReference type="Pfam" id="PF25052">
    <property type="entry name" value="AtDEF-like"/>
    <property type="match status" value="1"/>
</dbReference>
<keyword id="KW-0929">Antimicrobial</keyword>
<keyword id="KW-1015">Disulfide bond</keyword>
<keyword id="KW-0295">Fungicide</keyword>
<keyword id="KW-0611">Plant defense</keyword>
<keyword id="KW-1185">Reference proteome</keyword>
<keyword id="KW-0964">Secreted</keyword>
<keyword id="KW-0732">Signal</keyword>
<feature type="signal peptide" evidence="2">
    <location>
        <begin position="1"/>
        <end position="21"/>
    </location>
</feature>
<feature type="chain" id="PRO_0000017259" description="Putative defensin-like protein 184">
    <location>
        <begin position="22"/>
        <end position="76"/>
    </location>
</feature>
<feature type="disulfide bond" evidence="1">
    <location>
        <begin position="32"/>
        <end position="76"/>
    </location>
</feature>
<feature type="disulfide bond" evidence="1">
    <location>
        <begin position="38"/>
        <end position="58"/>
    </location>
</feature>
<feature type="disulfide bond" evidence="1">
    <location>
        <begin position="44"/>
        <end position="70"/>
    </location>
</feature>
<feature type="disulfide bond" evidence="1">
    <location>
        <begin position="48"/>
        <end position="72"/>
    </location>
</feature>